<accession>Q9C0X4</accession>
<protein>
    <recommendedName>
        <fullName>Putative uncharacterized protein C12C2.14c</fullName>
    </recommendedName>
</protein>
<name>YB6E_SCHPO</name>
<feature type="chain" id="PRO_0000303973" description="Putative uncharacterized protein C12C2.14c">
    <location>
        <begin position="1"/>
        <end position="111"/>
    </location>
</feature>
<feature type="transmembrane region" description="Helical" evidence="1">
    <location>
        <begin position="81"/>
        <end position="101"/>
    </location>
</feature>
<comment type="subcellular location">
    <subcellularLocation>
        <location evidence="2">Membrane</location>
        <topology evidence="2">Single-pass membrane protein</topology>
    </subcellularLocation>
</comment>
<dbReference type="EMBL" id="CU329671">
    <property type="protein sequence ID" value="CAC34974.1"/>
    <property type="molecule type" value="Genomic_DNA"/>
</dbReference>
<dbReference type="RefSeq" id="NP_596019.1">
    <property type="nucleotide sequence ID" value="NM_001021927.1"/>
</dbReference>
<dbReference type="SMR" id="Q9C0X4"/>
<dbReference type="PaxDb" id="4896-SPBC12C2.14c.1"/>
<dbReference type="EnsemblFungi" id="SPBC12C2.14c.1">
    <property type="protein sequence ID" value="SPBC12C2.14c.1:pep"/>
    <property type="gene ID" value="SPBC12C2.14c"/>
</dbReference>
<dbReference type="KEGG" id="spo:2539897"/>
<dbReference type="PomBase" id="SPBC12C2.14c"/>
<dbReference type="VEuPathDB" id="FungiDB:SPBC12C2.14c"/>
<dbReference type="HOGENOM" id="CLU_2159872_0_0_1"/>
<dbReference type="InParanoid" id="Q9C0X4"/>
<dbReference type="PRO" id="PR:Q9C0X4"/>
<dbReference type="Proteomes" id="UP000002485">
    <property type="component" value="Chromosome II"/>
</dbReference>
<dbReference type="GO" id="GO:0016020">
    <property type="term" value="C:membrane"/>
    <property type="evidence" value="ECO:0007669"/>
    <property type="project" value="UniProtKB-SubCell"/>
</dbReference>
<organism>
    <name type="scientific">Schizosaccharomyces pombe (strain 972 / ATCC 24843)</name>
    <name type="common">Fission yeast</name>
    <dbReference type="NCBI Taxonomy" id="284812"/>
    <lineage>
        <taxon>Eukaryota</taxon>
        <taxon>Fungi</taxon>
        <taxon>Dikarya</taxon>
        <taxon>Ascomycota</taxon>
        <taxon>Taphrinomycotina</taxon>
        <taxon>Schizosaccharomycetes</taxon>
        <taxon>Schizosaccharomycetales</taxon>
        <taxon>Schizosaccharomycetaceae</taxon>
        <taxon>Schizosaccharomyces</taxon>
    </lineage>
</organism>
<proteinExistence type="predicted"/>
<evidence type="ECO:0000255" key="1"/>
<evidence type="ECO:0000305" key="2"/>
<gene>
    <name type="ORF">SPBC12C2.14c</name>
</gene>
<sequence>MEELQYNFKKRRKTHNGISRFQRSALPLTIVYTIWSTFGSPCSGDQRVTLSITSILRKVQDRRESEKKVKGKGREEYRRYYFFLLFYVSFPHIFLGLFFFIDKKILPFQSV</sequence>
<reference key="1">
    <citation type="journal article" date="2002" name="Nature">
        <title>The genome sequence of Schizosaccharomyces pombe.</title>
        <authorList>
            <person name="Wood V."/>
            <person name="Gwilliam R."/>
            <person name="Rajandream M.A."/>
            <person name="Lyne M.H."/>
            <person name="Lyne R."/>
            <person name="Stewart A."/>
            <person name="Sgouros J.G."/>
            <person name="Peat N."/>
            <person name="Hayles J."/>
            <person name="Baker S.G."/>
            <person name="Basham D."/>
            <person name="Bowman S."/>
            <person name="Brooks K."/>
            <person name="Brown D."/>
            <person name="Brown S."/>
            <person name="Chillingworth T."/>
            <person name="Churcher C.M."/>
            <person name="Collins M."/>
            <person name="Connor R."/>
            <person name="Cronin A."/>
            <person name="Davis P."/>
            <person name="Feltwell T."/>
            <person name="Fraser A."/>
            <person name="Gentles S."/>
            <person name="Goble A."/>
            <person name="Hamlin N."/>
            <person name="Harris D.E."/>
            <person name="Hidalgo J."/>
            <person name="Hodgson G."/>
            <person name="Holroyd S."/>
            <person name="Hornsby T."/>
            <person name="Howarth S."/>
            <person name="Huckle E.J."/>
            <person name="Hunt S."/>
            <person name="Jagels K."/>
            <person name="James K.D."/>
            <person name="Jones L."/>
            <person name="Jones M."/>
            <person name="Leather S."/>
            <person name="McDonald S."/>
            <person name="McLean J."/>
            <person name="Mooney P."/>
            <person name="Moule S."/>
            <person name="Mungall K.L."/>
            <person name="Murphy L.D."/>
            <person name="Niblett D."/>
            <person name="Odell C."/>
            <person name="Oliver K."/>
            <person name="O'Neil S."/>
            <person name="Pearson D."/>
            <person name="Quail M.A."/>
            <person name="Rabbinowitsch E."/>
            <person name="Rutherford K.M."/>
            <person name="Rutter S."/>
            <person name="Saunders D."/>
            <person name="Seeger K."/>
            <person name="Sharp S."/>
            <person name="Skelton J."/>
            <person name="Simmonds M.N."/>
            <person name="Squares R."/>
            <person name="Squares S."/>
            <person name="Stevens K."/>
            <person name="Taylor K."/>
            <person name="Taylor R.G."/>
            <person name="Tivey A."/>
            <person name="Walsh S.V."/>
            <person name="Warren T."/>
            <person name="Whitehead S."/>
            <person name="Woodward J.R."/>
            <person name="Volckaert G."/>
            <person name="Aert R."/>
            <person name="Robben J."/>
            <person name="Grymonprez B."/>
            <person name="Weltjens I."/>
            <person name="Vanstreels E."/>
            <person name="Rieger M."/>
            <person name="Schaefer M."/>
            <person name="Mueller-Auer S."/>
            <person name="Gabel C."/>
            <person name="Fuchs M."/>
            <person name="Duesterhoeft A."/>
            <person name="Fritzc C."/>
            <person name="Holzer E."/>
            <person name="Moestl D."/>
            <person name="Hilbert H."/>
            <person name="Borzym K."/>
            <person name="Langer I."/>
            <person name="Beck A."/>
            <person name="Lehrach H."/>
            <person name="Reinhardt R."/>
            <person name="Pohl T.M."/>
            <person name="Eger P."/>
            <person name="Zimmermann W."/>
            <person name="Wedler H."/>
            <person name="Wambutt R."/>
            <person name="Purnelle B."/>
            <person name="Goffeau A."/>
            <person name="Cadieu E."/>
            <person name="Dreano S."/>
            <person name="Gloux S."/>
            <person name="Lelaure V."/>
            <person name="Mottier S."/>
            <person name="Galibert F."/>
            <person name="Aves S.J."/>
            <person name="Xiang Z."/>
            <person name="Hunt C."/>
            <person name="Moore K."/>
            <person name="Hurst S.M."/>
            <person name="Lucas M."/>
            <person name="Rochet M."/>
            <person name="Gaillardin C."/>
            <person name="Tallada V.A."/>
            <person name="Garzon A."/>
            <person name="Thode G."/>
            <person name="Daga R.R."/>
            <person name="Cruzado L."/>
            <person name="Jimenez J."/>
            <person name="Sanchez M."/>
            <person name="del Rey F."/>
            <person name="Benito J."/>
            <person name="Dominguez A."/>
            <person name="Revuelta J.L."/>
            <person name="Moreno S."/>
            <person name="Armstrong J."/>
            <person name="Forsburg S.L."/>
            <person name="Cerutti L."/>
            <person name="Lowe T."/>
            <person name="McCombie W.R."/>
            <person name="Paulsen I."/>
            <person name="Potashkin J."/>
            <person name="Shpakovski G.V."/>
            <person name="Ussery D."/>
            <person name="Barrell B.G."/>
            <person name="Nurse P."/>
        </authorList>
    </citation>
    <scope>NUCLEOTIDE SEQUENCE [LARGE SCALE GENOMIC DNA]</scope>
    <source>
        <strain>972 / ATCC 24843</strain>
    </source>
</reference>
<keyword id="KW-0472">Membrane</keyword>
<keyword id="KW-1185">Reference proteome</keyword>
<keyword id="KW-0812">Transmembrane</keyword>
<keyword id="KW-1133">Transmembrane helix</keyword>